<keyword id="KW-0067">ATP-binding</keyword>
<keyword id="KW-0133">Cell shape</keyword>
<keyword id="KW-0961">Cell wall biogenesis/degradation</keyword>
<keyword id="KW-0963">Cytoplasm</keyword>
<keyword id="KW-0436">Ligase</keyword>
<keyword id="KW-0460">Magnesium</keyword>
<keyword id="KW-0464">Manganese</keyword>
<keyword id="KW-0479">Metal-binding</keyword>
<keyword id="KW-0547">Nucleotide-binding</keyword>
<keyword id="KW-0573">Peptidoglycan synthesis</keyword>
<protein>
    <recommendedName>
        <fullName evidence="2">D-alanine--D-alanine ligase</fullName>
        <ecNumber evidence="2">6.3.2.4</ecNumber>
    </recommendedName>
    <alternativeName>
        <fullName evidence="2">D-Ala-D-Ala ligase</fullName>
    </alternativeName>
    <alternativeName>
        <fullName evidence="2">D-alanylalanine synthetase</fullName>
    </alternativeName>
</protein>
<accession>Q0AJE4</accession>
<feature type="chain" id="PRO_1000030474" description="D-alanine--D-alanine ligase">
    <location>
        <begin position="1"/>
        <end position="306"/>
    </location>
</feature>
<feature type="domain" description="ATP-grasp" evidence="2">
    <location>
        <begin position="105"/>
        <end position="300"/>
    </location>
</feature>
<feature type="binding site" evidence="2">
    <location>
        <begin position="131"/>
        <end position="186"/>
    </location>
    <ligand>
        <name>ATP</name>
        <dbReference type="ChEBI" id="CHEBI:30616"/>
    </ligand>
</feature>
<feature type="binding site" evidence="2">
    <location>
        <position position="254"/>
    </location>
    <ligand>
        <name>Mg(2+)</name>
        <dbReference type="ChEBI" id="CHEBI:18420"/>
        <label>1</label>
    </ligand>
</feature>
<feature type="binding site" evidence="2">
    <location>
        <position position="267"/>
    </location>
    <ligand>
        <name>Mg(2+)</name>
        <dbReference type="ChEBI" id="CHEBI:18420"/>
        <label>1</label>
    </ligand>
</feature>
<feature type="binding site" evidence="2">
    <location>
        <position position="267"/>
    </location>
    <ligand>
        <name>Mg(2+)</name>
        <dbReference type="ChEBI" id="CHEBI:18420"/>
        <label>2</label>
    </ligand>
</feature>
<feature type="binding site" evidence="2">
    <location>
        <position position="269"/>
    </location>
    <ligand>
        <name>Mg(2+)</name>
        <dbReference type="ChEBI" id="CHEBI:18420"/>
        <label>2</label>
    </ligand>
</feature>
<gene>
    <name evidence="2" type="primary">ddl</name>
    <name type="ordered locus">Neut_0243</name>
</gene>
<comment type="function">
    <text evidence="2">Cell wall formation.</text>
</comment>
<comment type="catalytic activity">
    <reaction evidence="2">
        <text>2 D-alanine + ATP = D-alanyl-D-alanine + ADP + phosphate + H(+)</text>
        <dbReference type="Rhea" id="RHEA:11224"/>
        <dbReference type="ChEBI" id="CHEBI:15378"/>
        <dbReference type="ChEBI" id="CHEBI:30616"/>
        <dbReference type="ChEBI" id="CHEBI:43474"/>
        <dbReference type="ChEBI" id="CHEBI:57416"/>
        <dbReference type="ChEBI" id="CHEBI:57822"/>
        <dbReference type="ChEBI" id="CHEBI:456216"/>
        <dbReference type="EC" id="6.3.2.4"/>
    </reaction>
</comment>
<comment type="cofactor">
    <cofactor evidence="1">
        <name>Mg(2+)</name>
        <dbReference type="ChEBI" id="CHEBI:18420"/>
    </cofactor>
    <cofactor evidence="1">
        <name>Mn(2+)</name>
        <dbReference type="ChEBI" id="CHEBI:29035"/>
    </cofactor>
    <text evidence="1">Binds 2 magnesium or manganese ions per subunit.</text>
</comment>
<comment type="pathway">
    <text evidence="2">Cell wall biogenesis; peptidoglycan biosynthesis.</text>
</comment>
<comment type="subcellular location">
    <subcellularLocation>
        <location evidence="2">Cytoplasm</location>
    </subcellularLocation>
</comment>
<comment type="similarity">
    <text evidence="2">Belongs to the D-alanine--D-alanine ligase family.</text>
</comment>
<reference key="1">
    <citation type="journal article" date="2007" name="Environ. Microbiol.">
        <title>Whole-genome analysis of the ammonia-oxidizing bacterium, Nitrosomonas eutropha C91: implications for niche adaptation.</title>
        <authorList>
            <person name="Stein L.Y."/>
            <person name="Arp D.J."/>
            <person name="Berube P.M."/>
            <person name="Chain P.S."/>
            <person name="Hauser L."/>
            <person name="Jetten M.S."/>
            <person name="Klotz M.G."/>
            <person name="Larimer F.W."/>
            <person name="Norton J.M."/>
            <person name="Op den Camp H.J.M."/>
            <person name="Shin M."/>
            <person name="Wei X."/>
        </authorList>
    </citation>
    <scope>NUCLEOTIDE SEQUENCE [LARGE SCALE GENOMIC DNA]</scope>
    <source>
        <strain>DSM 101675 / C91 / Nm57</strain>
    </source>
</reference>
<dbReference type="EC" id="6.3.2.4" evidence="2"/>
<dbReference type="EMBL" id="CP000450">
    <property type="protein sequence ID" value="ABI58527.1"/>
    <property type="molecule type" value="Genomic_DNA"/>
</dbReference>
<dbReference type="RefSeq" id="WP_011633371.1">
    <property type="nucleotide sequence ID" value="NC_008344.1"/>
</dbReference>
<dbReference type="SMR" id="Q0AJE4"/>
<dbReference type="STRING" id="335283.Neut_0243"/>
<dbReference type="KEGG" id="net:Neut_0243"/>
<dbReference type="eggNOG" id="COG1181">
    <property type="taxonomic scope" value="Bacteria"/>
</dbReference>
<dbReference type="HOGENOM" id="CLU_039268_1_2_4"/>
<dbReference type="OrthoDB" id="9813261at2"/>
<dbReference type="UniPathway" id="UPA00219"/>
<dbReference type="Proteomes" id="UP000001966">
    <property type="component" value="Chromosome"/>
</dbReference>
<dbReference type="GO" id="GO:0005829">
    <property type="term" value="C:cytosol"/>
    <property type="evidence" value="ECO:0007669"/>
    <property type="project" value="TreeGrafter"/>
</dbReference>
<dbReference type="GO" id="GO:0005524">
    <property type="term" value="F:ATP binding"/>
    <property type="evidence" value="ECO:0007669"/>
    <property type="project" value="UniProtKB-KW"/>
</dbReference>
<dbReference type="GO" id="GO:0008716">
    <property type="term" value="F:D-alanine-D-alanine ligase activity"/>
    <property type="evidence" value="ECO:0007669"/>
    <property type="project" value="UniProtKB-UniRule"/>
</dbReference>
<dbReference type="GO" id="GO:0046872">
    <property type="term" value="F:metal ion binding"/>
    <property type="evidence" value="ECO:0007669"/>
    <property type="project" value="UniProtKB-KW"/>
</dbReference>
<dbReference type="GO" id="GO:0071555">
    <property type="term" value="P:cell wall organization"/>
    <property type="evidence" value="ECO:0007669"/>
    <property type="project" value="UniProtKB-KW"/>
</dbReference>
<dbReference type="GO" id="GO:0009252">
    <property type="term" value="P:peptidoglycan biosynthetic process"/>
    <property type="evidence" value="ECO:0007669"/>
    <property type="project" value="UniProtKB-UniRule"/>
</dbReference>
<dbReference type="GO" id="GO:0008360">
    <property type="term" value="P:regulation of cell shape"/>
    <property type="evidence" value="ECO:0007669"/>
    <property type="project" value="UniProtKB-KW"/>
</dbReference>
<dbReference type="FunFam" id="3.40.50.20:FF:000013">
    <property type="entry name" value="D-alanine--D-alanine ligase"/>
    <property type="match status" value="1"/>
</dbReference>
<dbReference type="Gene3D" id="3.40.50.20">
    <property type="match status" value="1"/>
</dbReference>
<dbReference type="Gene3D" id="3.30.1490.20">
    <property type="entry name" value="ATP-grasp fold, A domain"/>
    <property type="match status" value="1"/>
</dbReference>
<dbReference type="Gene3D" id="3.30.470.20">
    <property type="entry name" value="ATP-grasp fold, B domain"/>
    <property type="match status" value="1"/>
</dbReference>
<dbReference type="HAMAP" id="MF_00047">
    <property type="entry name" value="Dala_Dala_lig"/>
    <property type="match status" value="1"/>
</dbReference>
<dbReference type="InterPro" id="IPR011761">
    <property type="entry name" value="ATP-grasp"/>
</dbReference>
<dbReference type="InterPro" id="IPR013815">
    <property type="entry name" value="ATP_grasp_subdomain_1"/>
</dbReference>
<dbReference type="InterPro" id="IPR000291">
    <property type="entry name" value="D-Ala_lig_Van_CS"/>
</dbReference>
<dbReference type="InterPro" id="IPR005905">
    <property type="entry name" value="D_ala_D_ala"/>
</dbReference>
<dbReference type="InterPro" id="IPR011095">
    <property type="entry name" value="Dala_Dala_lig_C"/>
</dbReference>
<dbReference type="InterPro" id="IPR011127">
    <property type="entry name" value="Dala_Dala_lig_N"/>
</dbReference>
<dbReference type="InterPro" id="IPR016185">
    <property type="entry name" value="PreATP-grasp_dom_sf"/>
</dbReference>
<dbReference type="NCBIfam" id="TIGR01205">
    <property type="entry name" value="D_ala_D_alaTIGR"/>
    <property type="match status" value="1"/>
</dbReference>
<dbReference type="NCBIfam" id="NF002378">
    <property type="entry name" value="PRK01372.1"/>
    <property type="match status" value="1"/>
</dbReference>
<dbReference type="PANTHER" id="PTHR23132">
    <property type="entry name" value="D-ALANINE--D-ALANINE LIGASE"/>
    <property type="match status" value="1"/>
</dbReference>
<dbReference type="PANTHER" id="PTHR23132:SF23">
    <property type="entry name" value="D-ALANINE--D-ALANINE LIGASE B"/>
    <property type="match status" value="1"/>
</dbReference>
<dbReference type="Pfam" id="PF07478">
    <property type="entry name" value="Dala_Dala_lig_C"/>
    <property type="match status" value="1"/>
</dbReference>
<dbReference type="Pfam" id="PF01820">
    <property type="entry name" value="Dala_Dala_lig_N"/>
    <property type="match status" value="1"/>
</dbReference>
<dbReference type="PIRSF" id="PIRSF039102">
    <property type="entry name" value="Ddl/VanB"/>
    <property type="match status" value="1"/>
</dbReference>
<dbReference type="SUPFAM" id="SSF56059">
    <property type="entry name" value="Glutathione synthetase ATP-binding domain-like"/>
    <property type="match status" value="1"/>
</dbReference>
<dbReference type="SUPFAM" id="SSF52440">
    <property type="entry name" value="PreATP-grasp domain"/>
    <property type="match status" value="1"/>
</dbReference>
<dbReference type="PROSITE" id="PS50975">
    <property type="entry name" value="ATP_GRASP"/>
    <property type="match status" value="1"/>
</dbReference>
<dbReference type="PROSITE" id="PS00843">
    <property type="entry name" value="DALA_DALA_LIGASE_1"/>
    <property type="match status" value="1"/>
</dbReference>
<dbReference type="PROSITE" id="PS00844">
    <property type="entry name" value="DALA_DALA_LIGASE_2"/>
    <property type="match status" value="1"/>
</dbReference>
<organism>
    <name type="scientific">Nitrosomonas eutropha (strain DSM 101675 / C91 / Nm57)</name>
    <dbReference type="NCBI Taxonomy" id="335283"/>
    <lineage>
        <taxon>Bacteria</taxon>
        <taxon>Pseudomonadati</taxon>
        <taxon>Pseudomonadota</taxon>
        <taxon>Betaproteobacteria</taxon>
        <taxon>Nitrosomonadales</taxon>
        <taxon>Nitrosomonadaceae</taxon>
        <taxon>Nitrosomonas</taxon>
    </lineage>
</organism>
<sequence>MNIRDLGKVAVLLGGRSAEREISLKSGHAVLAALQRSQVDAHAFDPVGQPLEDLLKQGFDRAFIALHGRYGEDGSVQGALELMDLPYTGSGILASALAMDKWRTKMIWQAAGISTPDYVMLDADSNFQEVTDRLGLPLIIKPAREGSTIGLNKVDYAQDMQSAYQTAAQHDSLVIAEQFIQGIELTAAILDDVPLPLVRIDVTEGLYDYQAKYFSESTRYTCPSGLSKILTTRIQEQALYAHRILGCTGWSRVDLILDKNGQPFFLEANTSPGMTNHSLVPMAAQAAGISFDELVIQILELSCEYA</sequence>
<name>DDL_NITEC</name>
<proteinExistence type="inferred from homology"/>
<evidence type="ECO:0000250" key="1"/>
<evidence type="ECO:0000255" key="2">
    <source>
        <dbReference type="HAMAP-Rule" id="MF_00047"/>
    </source>
</evidence>